<keyword id="KW-0251">Elongation factor</keyword>
<keyword id="KW-0342">GTP-binding</keyword>
<keyword id="KW-0496">Mitochondrion</keyword>
<keyword id="KW-0547">Nucleotide-binding</keyword>
<keyword id="KW-0648">Protein biosynthesis</keyword>
<keyword id="KW-0809">Transit peptide</keyword>
<evidence type="ECO:0000255" key="1">
    <source>
        <dbReference type="HAMAP-Rule" id="MF_03061"/>
    </source>
</evidence>
<evidence type="ECO:0000305" key="2"/>
<sequence>MSAIARAAARVRQQNTTPLQRPLLLQRKPVLTHTLPLHASPLKPSLATSITSPNFQQSFQRRWASASAKAEEGAKEEVWPQRKLPELTETDKLRLRRQRNVGISAHIDSGKTTLTERVLYYTGRIRDIHEVRGRDAVGAKMDSMELEREKGITIQSAATFADWVAPKPPTELKEGETVGNTDKQKFAINIIDTPGHVDFTIEVERALRVLDGAVLVLCAVSGVQSQTITVDRQMRRYNVPRLAFINKMDRAGSNPFRVIGQLRGKLKMNAAAVQVPIGSESDFAGVVDIVRMKAIYNEGVKGNQIVETDEIPESVRALAEEKRAELIEQLSEADETLCDLFLDEAPITPTDIAQALQRATTSLRFTPVFMGSAIKNTGVQPLLDGVCAYLPNPSEVQNQAMDATLPAHAPTIPLVPATDAPLVGLAFKLEEGRYGQLTYMRVYQGELKRGSMIYNARTGKRVKVPRLVRMHADEMEDVDAVVAGEICAMFGVECSSGDTFTDGSSTYTMTSMFVPEPVISLSIRPEGNETPNFSRALNRFQKEDPTFRVHVDSESQETIISGMGELHLDIYVERMKREYNVACVTGKPRVAFRETITEAAKFNYTHKKQSGGSGQFGRVIGSIEPMETDPDTGKDTAFENRIIGGNIPNQFIPAIQKGFQEALDRGLITGHPITGCKFVLDDGSAHAVDSNELAFRLAAIGAFREAFNKARPVVLEPVMTVEIVAPIEFQGNVIGAINQRKGTIVDTEVRDDEFTLTAEVALNDMFGYSSQLRGMTQGKGEFSMEYKNHQPVLPNIQKEMAEAFRKKQLSK</sequence>
<reference key="1">
    <citation type="journal article" date="2005" name="Science">
        <title>The genome of the basidiomycetous yeast and human pathogen Cryptococcus neoformans.</title>
        <authorList>
            <person name="Loftus B.J."/>
            <person name="Fung E."/>
            <person name="Roncaglia P."/>
            <person name="Rowley D."/>
            <person name="Amedeo P."/>
            <person name="Bruno D."/>
            <person name="Vamathevan J."/>
            <person name="Miranda M."/>
            <person name="Anderson I.J."/>
            <person name="Fraser J.A."/>
            <person name="Allen J.E."/>
            <person name="Bosdet I.E."/>
            <person name="Brent M.R."/>
            <person name="Chiu R."/>
            <person name="Doering T.L."/>
            <person name="Donlin M.J."/>
            <person name="D'Souza C.A."/>
            <person name="Fox D.S."/>
            <person name="Grinberg V."/>
            <person name="Fu J."/>
            <person name="Fukushima M."/>
            <person name="Haas B.J."/>
            <person name="Huang J.C."/>
            <person name="Janbon G."/>
            <person name="Jones S.J.M."/>
            <person name="Koo H.L."/>
            <person name="Krzywinski M.I."/>
            <person name="Kwon-Chung K.J."/>
            <person name="Lengeler K.B."/>
            <person name="Maiti R."/>
            <person name="Marra M.A."/>
            <person name="Marra R.E."/>
            <person name="Mathewson C.A."/>
            <person name="Mitchell T.G."/>
            <person name="Pertea M."/>
            <person name="Riggs F.R."/>
            <person name="Salzberg S.L."/>
            <person name="Schein J.E."/>
            <person name="Shvartsbeyn A."/>
            <person name="Shin H."/>
            <person name="Shumway M."/>
            <person name="Specht C.A."/>
            <person name="Suh B.B."/>
            <person name="Tenney A."/>
            <person name="Utterback T.R."/>
            <person name="Wickes B.L."/>
            <person name="Wortman J.R."/>
            <person name="Wye N.H."/>
            <person name="Kronstad J.W."/>
            <person name="Lodge J.K."/>
            <person name="Heitman J."/>
            <person name="Davis R.W."/>
            <person name="Fraser C.M."/>
            <person name="Hyman R.W."/>
        </authorList>
    </citation>
    <scope>NUCLEOTIDE SEQUENCE [LARGE SCALE GENOMIC DNA]</scope>
    <source>
        <strain>B-3501A</strain>
    </source>
</reference>
<dbReference type="EMBL" id="AAEY01000016">
    <property type="protein sequence ID" value="EAL21709.1"/>
    <property type="molecule type" value="Genomic_DNA"/>
</dbReference>
<dbReference type="RefSeq" id="XP_776356.1">
    <property type="nucleotide sequence ID" value="XM_771263.1"/>
</dbReference>
<dbReference type="SMR" id="P0CN33"/>
<dbReference type="GeneID" id="4935239"/>
<dbReference type="KEGG" id="cnb:CNBC5730"/>
<dbReference type="VEuPathDB" id="FungiDB:CNBC5730"/>
<dbReference type="HOGENOM" id="CLU_002794_4_1_1"/>
<dbReference type="OrthoDB" id="1668at5206"/>
<dbReference type="UniPathway" id="UPA00345"/>
<dbReference type="GO" id="GO:0005739">
    <property type="term" value="C:mitochondrion"/>
    <property type="evidence" value="ECO:0007669"/>
    <property type="project" value="UniProtKB-SubCell"/>
</dbReference>
<dbReference type="GO" id="GO:0005525">
    <property type="term" value="F:GTP binding"/>
    <property type="evidence" value="ECO:0007669"/>
    <property type="project" value="UniProtKB-UniRule"/>
</dbReference>
<dbReference type="GO" id="GO:0003924">
    <property type="term" value="F:GTPase activity"/>
    <property type="evidence" value="ECO:0007669"/>
    <property type="project" value="UniProtKB-UniRule"/>
</dbReference>
<dbReference type="GO" id="GO:0003746">
    <property type="term" value="F:translation elongation factor activity"/>
    <property type="evidence" value="ECO:0007669"/>
    <property type="project" value="UniProtKB-UniRule"/>
</dbReference>
<dbReference type="GO" id="GO:0070125">
    <property type="term" value="P:mitochondrial translational elongation"/>
    <property type="evidence" value="ECO:0007669"/>
    <property type="project" value="UniProtKB-UniRule"/>
</dbReference>
<dbReference type="CDD" id="cd01886">
    <property type="entry name" value="EF-G"/>
    <property type="match status" value="1"/>
</dbReference>
<dbReference type="CDD" id="cd16262">
    <property type="entry name" value="EFG_III"/>
    <property type="match status" value="1"/>
</dbReference>
<dbReference type="CDD" id="cd01434">
    <property type="entry name" value="EFG_mtEFG1_IV"/>
    <property type="match status" value="1"/>
</dbReference>
<dbReference type="CDD" id="cd04097">
    <property type="entry name" value="mtEFG1_C"/>
    <property type="match status" value="1"/>
</dbReference>
<dbReference type="CDD" id="cd04091">
    <property type="entry name" value="mtEFG1_II_like"/>
    <property type="match status" value="1"/>
</dbReference>
<dbReference type="FunFam" id="3.30.230.10:FF:000003">
    <property type="entry name" value="Elongation factor G"/>
    <property type="match status" value="1"/>
</dbReference>
<dbReference type="FunFam" id="3.30.70.870:FF:000001">
    <property type="entry name" value="Elongation factor G"/>
    <property type="match status" value="1"/>
</dbReference>
<dbReference type="FunFam" id="2.40.30.10:FF:000022">
    <property type="entry name" value="Elongation factor G, mitochondrial"/>
    <property type="match status" value="1"/>
</dbReference>
<dbReference type="FunFam" id="3.30.70.240:FF:000015">
    <property type="entry name" value="Elongation factor G, mitochondrial"/>
    <property type="match status" value="1"/>
</dbReference>
<dbReference type="FunFam" id="3.40.50.300:FF:000558">
    <property type="entry name" value="Elongation factor G, mitochondrial"/>
    <property type="match status" value="1"/>
</dbReference>
<dbReference type="Gene3D" id="3.30.230.10">
    <property type="match status" value="1"/>
</dbReference>
<dbReference type="Gene3D" id="3.30.70.240">
    <property type="match status" value="1"/>
</dbReference>
<dbReference type="Gene3D" id="3.30.70.870">
    <property type="entry name" value="Elongation Factor G (Translational Gtpase), domain 3"/>
    <property type="match status" value="1"/>
</dbReference>
<dbReference type="Gene3D" id="3.40.50.300">
    <property type="entry name" value="P-loop containing nucleotide triphosphate hydrolases"/>
    <property type="match status" value="1"/>
</dbReference>
<dbReference type="Gene3D" id="2.40.30.10">
    <property type="entry name" value="Translation factors"/>
    <property type="match status" value="1"/>
</dbReference>
<dbReference type="HAMAP" id="MF_00054_B">
    <property type="entry name" value="EF_G_EF_2_B"/>
    <property type="match status" value="1"/>
</dbReference>
<dbReference type="InterPro" id="IPR041095">
    <property type="entry name" value="EFG_II"/>
</dbReference>
<dbReference type="InterPro" id="IPR009022">
    <property type="entry name" value="EFG_III"/>
</dbReference>
<dbReference type="InterPro" id="IPR035647">
    <property type="entry name" value="EFG_III/V"/>
</dbReference>
<dbReference type="InterPro" id="IPR047872">
    <property type="entry name" value="EFG_IV"/>
</dbReference>
<dbReference type="InterPro" id="IPR035649">
    <property type="entry name" value="EFG_V"/>
</dbReference>
<dbReference type="InterPro" id="IPR000640">
    <property type="entry name" value="EFG_V-like"/>
</dbReference>
<dbReference type="InterPro" id="IPR004161">
    <property type="entry name" value="EFTu-like_2"/>
</dbReference>
<dbReference type="InterPro" id="IPR031157">
    <property type="entry name" value="G_TR_CS"/>
</dbReference>
<dbReference type="InterPro" id="IPR027417">
    <property type="entry name" value="P-loop_NTPase"/>
</dbReference>
<dbReference type="InterPro" id="IPR020568">
    <property type="entry name" value="Ribosomal_Su5_D2-typ_SF"/>
</dbReference>
<dbReference type="InterPro" id="IPR014721">
    <property type="entry name" value="Ribsml_uS5_D2-typ_fold_subgr"/>
</dbReference>
<dbReference type="InterPro" id="IPR005225">
    <property type="entry name" value="Small_GTP-bd"/>
</dbReference>
<dbReference type="InterPro" id="IPR000795">
    <property type="entry name" value="T_Tr_GTP-bd_dom"/>
</dbReference>
<dbReference type="InterPro" id="IPR009000">
    <property type="entry name" value="Transl_B-barrel_sf"/>
</dbReference>
<dbReference type="InterPro" id="IPR004540">
    <property type="entry name" value="Transl_elong_EFG/EF2"/>
</dbReference>
<dbReference type="InterPro" id="IPR005517">
    <property type="entry name" value="Transl_elong_EFG/EF2_IV"/>
</dbReference>
<dbReference type="NCBIfam" id="TIGR00484">
    <property type="entry name" value="EF-G"/>
    <property type="match status" value="1"/>
</dbReference>
<dbReference type="NCBIfam" id="NF009381">
    <property type="entry name" value="PRK12740.1-5"/>
    <property type="match status" value="1"/>
</dbReference>
<dbReference type="NCBIfam" id="TIGR00231">
    <property type="entry name" value="small_GTP"/>
    <property type="match status" value="1"/>
</dbReference>
<dbReference type="PANTHER" id="PTHR43636">
    <property type="entry name" value="ELONGATION FACTOR G, MITOCHONDRIAL"/>
    <property type="match status" value="1"/>
</dbReference>
<dbReference type="PANTHER" id="PTHR43636:SF2">
    <property type="entry name" value="ELONGATION FACTOR G, MITOCHONDRIAL"/>
    <property type="match status" value="1"/>
</dbReference>
<dbReference type="Pfam" id="PF00679">
    <property type="entry name" value="EFG_C"/>
    <property type="match status" value="1"/>
</dbReference>
<dbReference type="Pfam" id="PF14492">
    <property type="entry name" value="EFG_III"/>
    <property type="match status" value="1"/>
</dbReference>
<dbReference type="Pfam" id="PF03764">
    <property type="entry name" value="EFG_IV"/>
    <property type="match status" value="1"/>
</dbReference>
<dbReference type="Pfam" id="PF00009">
    <property type="entry name" value="GTP_EFTU"/>
    <property type="match status" value="1"/>
</dbReference>
<dbReference type="Pfam" id="PF03144">
    <property type="entry name" value="GTP_EFTU_D2"/>
    <property type="match status" value="1"/>
</dbReference>
<dbReference type="PRINTS" id="PR00315">
    <property type="entry name" value="ELONGATNFCT"/>
</dbReference>
<dbReference type="SMART" id="SM00838">
    <property type="entry name" value="EFG_C"/>
    <property type="match status" value="1"/>
</dbReference>
<dbReference type="SMART" id="SM00889">
    <property type="entry name" value="EFG_IV"/>
    <property type="match status" value="1"/>
</dbReference>
<dbReference type="SUPFAM" id="SSF54980">
    <property type="entry name" value="EF-G C-terminal domain-like"/>
    <property type="match status" value="2"/>
</dbReference>
<dbReference type="SUPFAM" id="SSF52540">
    <property type="entry name" value="P-loop containing nucleoside triphosphate hydrolases"/>
    <property type="match status" value="1"/>
</dbReference>
<dbReference type="SUPFAM" id="SSF54211">
    <property type="entry name" value="Ribosomal protein S5 domain 2-like"/>
    <property type="match status" value="1"/>
</dbReference>
<dbReference type="SUPFAM" id="SSF50447">
    <property type="entry name" value="Translation proteins"/>
    <property type="match status" value="1"/>
</dbReference>
<dbReference type="PROSITE" id="PS00301">
    <property type="entry name" value="G_TR_1"/>
    <property type="match status" value="1"/>
</dbReference>
<dbReference type="PROSITE" id="PS51722">
    <property type="entry name" value="G_TR_2"/>
    <property type="match status" value="1"/>
</dbReference>
<protein>
    <recommendedName>
        <fullName evidence="1">Elongation factor G, mitochondrial</fullName>
        <shortName evidence="1">EF-Gmt</shortName>
    </recommendedName>
    <alternativeName>
        <fullName evidence="1">Elongation factor G 1, mitochondrial</fullName>
        <shortName evidence="1">mEF-G 1</shortName>
    </alternativeName>
    <alternativeName>
        <fullName evidence="1">Elongation factor G1</fullName>
    </alternativeName>
</protein>
<comment type="function">
    <text evidence="1">Mitochondrial GTPase that catalyzes the GTP-dependent ribosomal translocation step during translation elongation. During this step, the ribosome changes from the pre-translocational (PRE) to the post-translocational (POST) state as the newly formed A-site-bound peptidyl-tRNA and P-site-bound deacylated tRNA move to the P and E sites, respectively. Catalyzes the coordinated movement of the two tRNA molecules, the mRNA and conformational changes in the ribosome.</text>
</comment>
<comment type="pathway">
    <text evidence="1">Protein biosynthesis; polypeptide chain elongation.</text>
</comment>
<comment type="subcellular location">
    <subcellularLocation>
        <location evidence="1">Mitochondrion</location>
    </subcellularLocation>
</comment>
<comment type="similarity">
    <text evidence="2">Belongs to the TRAFAC class translation factor GTPase superfamily. Classic translation factor GTPase family. EF-G/EF-2 subfamily.</text>
</comment>
<proteinExistence type="inferred from homology"/>
<accession>P0CN33</accession>
<accession>Q55VB1</accession>
<accession>Q5KKX4</accession>
<feature type="transit peptide" description="Mitochondrion" evidence="1">
    <location>
        <begin position="1"/>
        <end position="64"/>
    </location>
</feature>
<feature type="chain" id="PRO_0000410070" description="Elongation factor G, mitochondrial">
    <location>
        <begin position="65"/>
        <end position="811"/>
    </location>
</feature>
<feature type="domain" description="tr-type G">
    <location>
        <begin position="96"/>
        <end position="394"/>
    </location>
</feature>
<feature type="binding site" evidence="1">
    <location>
        <begin position="105"/>
        <end position="112"/>
    </location>
    <ligand>
        <name>GTP</name>
        <dbReference type="ChEBI" id="CHEBI:37565"/>
    </ligand>
</feature>
<feature type="binding site" evidence="1">
    <location>
        <begin position="192"/>
        <end position="196"/>
    </location>
    <ligand>
        <name>GTP</name>
        <dbReference type="ChEBI" id="CHEBI:37565"/>
    </ligand>
</feature>
<feature type="binding site" evidence="1">
    <location>
        <begin position="246"/>
        <end position="249"/>
    </location>
    <ligand>
        <name>GTP</name>
        <dbReference type="ChEBI" id="CHEBI:37565"/>
    </ligand>
</feature>
<gene>
    <name evidence="1" type="primary">MEF1</name>
    <name type="ordered locus">CNBC5730</name>
</gene>
<name>EFGM_CRYNB</name>
<organism>
    <name type="scientific">Cryptococcus neoformans var. neoformans serotype D (strain B-3501A)</name>
    <name type="common">Filobasidiella neoformans</name>
    <dbReference type="NCBI Taxonomy" id="283643"/>
    <lineage>
        <taxon>Eukaryota</taxon>
        <taxon>Fungi</taxon>
        <taxon>Dikarya</taxon>
        <taxon>Basidiomycota</taxon>
        <taxon>Agaricomycotina</taxon>
        <taxon>Tremellomycetes</taxon>
        <taxon>Tremellales</taxon>
        <taxon>Cryptococcaceae</taxon>
        <taxon>Cryptococcus</taxon>
        <taxon>Cryptococcus neoformans species complex</taxon>
    </lineage>
</organism>